<reference key="1">
    <citation type="journal article" date="2005" name="J. Bacteriol.">
        <title>Swine and poultry pathogens: the complete genome sequences of two strains of Mycoplasma hyopneumoniae and a strain of Mycoplasma synoviae.</title>
        <authorList>
            <person name="Vasconcelos A.T.R."/>
            <person name="Ferreira H.B."/>
            <person name="Bizarro C.V."/>
            <person name="Bonatto S.L."/>
            <person name="Carvalho M.O."/>
            <person name="Pinto P.M."/>
            <person name="Almeida D.F."/>
            <person name="Almeida L.G.P."/>
            <person name="Almeida R."/>
            <person name="Alves-Junior L."/>
            <person name="Assuncao E.N."/>
            <person name="Azevedo V.A.C."/>
            <person name="Bogo M.R."/>
            <person name="Brigido M.M."/>
            <person name="Brocchi M."/>
            <person name="Burity H.A."/>
            <person name="Camargo A.A."/>
            <person name="Camargo S.S."/>
            <person name="Carepo M.S."/>
            <person name="Carraro D.M."/>
            <person name="de Mattos Cascardo J.C."/>
            <person name="Castro L.A."/>
            <person name="Cavalcanti G."/>
            <person name="Chemale G."/>
            <person name="Collevatti R.G."/>
            <person name="Cunha C.W."/>
            <person name="Dallagiovanna B."/>
            <person name="Dambros B.P."/>
            <person name="Dellagostin O.A."/>
            <person name="Falcao C."/>
            <person name="Fantinatti-Garboggini F."/>
            <person name="Felipe M.S.S."/>
            <person name="Fiorentin L."/>
            <person name="Franco G.R."/>
            <person name="Freitas N.S.A."/>
            <person name="Frias D."/>
            <person name="Grangeiro T.B."/>
            <person name="Grisard E.C."/>
            <person name="Guimaraes C.T."/>
            <person name="Hungria M."/>
            <person name="Jardim S.N."/>
            <person name="Krieger M.A."/>
            <person name="Laurino J.P."/>
            <person name="Lima L.F.A."/>
            <person name="Lopes M.I."/>
            <person name="Loreto E.L.S."/>
            <person name="Madeira H.M.F."/>
            <person name="Manfio G.P."/>
            <person name="Maranhao A.Q."/>
            <person name="Martinkovics C.T."/>
            <person name="Medeiros S.R.B."/>
            <person name="Moreira M.A.M."/>
            <person name="Neiva M."/>
            <person name="Ramalho-Neto C.E."/>
            <person name="Nicolas M.F."/>
            <person name="Oliveira S.C."/>
            <person name="Paixao R.F.C."/>
            <person name="Pedrosa F.O."/>
            <person name="Pena S.D.J."/>
            <person name="Pereira M."/>
            <person name="Pereira-Ferrari L."/>
            <person name="Piffer I."/>
            <person name="Pinto L.S."/>
            <person name="Potrich D.P."/>
            <person name="Salim A.C.M."/>
            <person name="Santos F.R."/>
            <person name="Schmitt R."/>
            <person name="Schneider M.P.C."/>
            <person name="Schrank A."/>
            <person name="Schrank I.S."/>
            <person name="Schuck A.F."/>
            <person name="Seuanez H.N."/>
            <person name="Silva D.W."/>
            <person name="Silva R."/>
            <person name="Silva S.C."/>
            <person name="Soares C.M.A."/>
            <person name="Souza K.R.L."/>
            <person name="Souza R.C."/>
            <person name="Staats C.C."/>
            <person name="Steffens M.B.R."/>
            <person name="Teixeira S.M.R."/>
            <person name="Urmenyi T.P."/>
            <person name="Vainstein M.H."/>
            <person name="Zuccherato L.W."/>
            <person name="Simpson A.J.G."/>
            <person name="Zaha A."/>
        </authorList>
    </citation>
    <scope>NUCLEOTIDE SEQUENCE [LARGE SCALE GENOMIC DNA]</scope>
    <source>
        <strain>53</strain>
    </source>
</reference>
<gene>
    <name evidence="1" type="primary">secA</name>
    <name type="ordered locus">MS53_0128</name>
</gene>
<sequence>MAFFSKFLNIKSTEMRIAEKSLKRINDLEKYVINNTDEELRSKTQFFKDLLKEGYKLEDIRDEVFAVAREATKRVLGKRPYDVQILGGILLDLGSVAEMKTGEGKTITSIAPVYLNALSGKGAIVSTVNEYLTERDAQEMGQVFNYLGLSVGINKAQMDPNLKRYAYSCDITYSVHSELGFDYLRDNMVSDMSEKVQRELNFCLIDEVDSILIDEAKTPLIISGGEANDSSSYYSADQFVRTLNNDDFLVDEESKAVTLTASGIEKANSFFRIDDLYNIEHSEKVHLIQNALRAHKVFKIDVEYIVKNNKIELVDAFTGRIMEGRSYSEGLQQAIQAKEMVEIEPETQTLATITYQNFFRMFNKLCGMTGTGKTEEQEFIDIYNMRVNVVPTNKPIAREDAPDLIFATAKDKWEAVGKEVERLYQKGQPVLVGTAQIEDSEIIHRILIEKNVPHTVLNAKQDKALEAEIIAQAGVKGAVTIATNMAGRGTDIKPSKEALELGGLYVLGTDKAESRRIDNQLRGRSGRQGDVGISRFYISLEDQLIMRFANFEAFQEVYAKDAGKEITNKQLRFAFNNAQKKIEGFNYDSRKSVLNYDDVIRQQRDLIYSQRDLLLISNEFEEIIRRMIKVFVKNLVAIEDHKLKSGAYDYQKLVDFLNKNIAVYIKHDFNVDEFKRIHDNELVDKVNQMVNDIYNQWLANAIEKTDQAYIDNFKKQVLLKTLDDNWKKHINKMDKLRSNVNLVQYSQKNPYQIYTDEGTKMFEDLIQTIAFESVLKVFSSPLGEKSLITAEIKNDPLYQQVASTFEYNPYLSISEQEKQLLERYNNVKQRLNEVEQQNLQEQSYKDPASDNLENNPEPKTGSQSQSEHEMVLTPDTVIDPSIDTNQWFEEINIDDFINVTKKDSELESKEKEQEEVKNQETQPKENKPAETKVDATKNQENVSEELKAKEVATVVEEKPKKVSKAKSEKLKVAKKVKPKDLESKEKPKSDKAKKSLAKKETQKPKKPKITSEVKIAKVEKTNKKAKAQDKPKAKVTKAKETKPKTEVKADKVKTKTAKTSEAKAQKVEAENFVNKIVFPKNKIDLKLEKIKLK</sequence>
<protein>
    <recommendedName>
        <fullName evidence="1">Protein translocase subunit SecA</fullName>
        <ecNumber evidence="1">7.4.2.8</ecNumber>
    </recommendedName>
</protein>
<evidence type="ECO:0000255" key="1">
    <source>
        <dbReference type="HAMAP-Rule" id="MF_01382"/>
    </source>
</evidence>
<evidence type="ECO:0000256" key="2">
    <source>
        <dbReference type="SAM" id="MobiDB-lite"/>
    </source>
</evidence>
<name>SECA_MYCS5</name>
<organism>
    <name type="scientific">Mycoplasmopsis synoviae (strain 53)</name>
    <name type="common">Mycoplasma synoviae</name>
    <dbReference type="NCBI Taxonomy" id="262723"/>
    <lineage>
        <taxon>Bacteria</taxon>
        <taxon>Bacillati</taxon>
        <taxon>Mycoplasmatota</taxon>
        <taxon>Mycoplasmoidales</taxon>
        <taxon>Metamycoplasmataceae</taxon>
        <taxon>Mycoplasmopsis</taxon>
    </lineage>
</organism>
<feature type="chain" id="PRO_0000320860" description="Protein translocase subunit SecA">
    <location>
        <begin position="1"/>
        <end position="1093"/>
    </location>
</feature>
<feature type="region of interest" description="Disordered" evidence="2">
    <location>
        <begin position="837"/>
        <end position="869"/>
    </location>
</feature>
<feature type="region of interest" description="Disordered" evidence="2">
    <location>
        <begin position="904"/>
        <end position="1062"/>
    </location>
</feature>
<feature type="compositionally biased region" description="Basic and acidic residues" evidence="2">
    <location>
        <begin position="904"/>
        <end position="937"/>
    </location>
</feature>
<feature type="compositionally biased region" description="Basic and acidic residues" evidence="2">
    <location>
        <begin position="944"/>
        <end position="971"/>
    </location>
</feature>
<feature type="compositionally biased region" description="Basic and acidic residues" evidence="2">
    <location>
        <begin position="978"/>
        <end position="1062"/>
    </location>
</feature>
<feature type="binding site" evidence="1">
    <location>
        <position position="84"/>
    </location>
    <ligand>
        <name>ATP</name>
        <dbReference type="ChEBI" id="CHEBI:30616"/>
    </ligand>
</feature>
<feature type="binding site" evidence="1">
    <location>
        <begin position="102"/>
        <end position="106"/>
    </location>
    <ligand>
        <name>ATP</name>
        <dbReference type="ChEBI" id="CHEBI:30616"/>
    </ligand>
</feature>
<feature type="binding site" evidence="1">
    <location>
        <position position="491"/>
    </location>
    <ligand>
        <name>ATP</name>
        <dbReference type="ChEBI" id="CHEBI:30616"/>
    </ligand>
</feature>
<proteinExistence type="inferred from homology"/>
<comment type="function">
    <text evidence="1">Part of the Sec protein translocase complex. Interacts with the SecYEG preprotein conducting channel. Has a central role in coupling the hydrolysis of ATP to the transfer of proteins into and across the cell membrane, serving as an ATP-driven molecular motor driving the stepwise translocation of polypeptide chains across the membrane.</text>
</comment>
<comment type="catalytic activity">
    <reaction evidence="1">
        <text>ATP + H2O + cellular proteinSide 1 = ADP + phosphate + cellular proteinSide 2.</text>
        <dbReference type="EC" id="7.4.2.8"/>
    </reaction>
</comment>
<comment type="subunit">
    <text evidence="1">Monomer and homodimer. Part of the essential Sec protein translocation apparatus which comprises SecA, SecYEG and auxiliary proteins SecDF. Other proteins may also be involved.</text>
</comment>
<comment type="subcellular location">
    <subcellularLocation>
        <location evidence="1">Cell membrane</location>
        <topology evidence="1">Peripheral membrane protein</topology>
        <orientation evidence="1">Cytoplasmic side</orientation>
    </subcellularLocation>
    <subcellularLocation>
        <location evidence="1">Cytoplasm</location>
    </subcellularLocation>
    <text evidence="1">Distribution is 50-50.</text>
</comment>
<comment type="similarity">
    <text evidence="1">Belongs to the SecA family.</text>
</comment>
<accession>Q4A6S2</accession>
<dbReference type="EC" id="7.4.2.8" evidence="1"/>
<dbReference type="EMBL" id="AE017245">
    <property type="protein sequence ID" value="AAZ43549.2"/>
    <property type="molecule type" value="Genomic_DNA"/>
</dbReference>
<dbReference type="RefSeq" id="WP_011283292.1">
    <property type="nucleotide sequence ID" value="NC_007294.1"/>
</dbReference>
<dbReference type="SMR" id="Q4A6S2"/>
<dbReference type="STRING" id="262723.MS53_0128"/>
<dbReference type="KEGG" id="msy:MS53_0128"/>
<dbReference type="eggNOG" id="COG0653">
    <property type="taxonomic scope" value="Bacteria"/>
</dbReference>
<dbReference type="HOGENOM" id="CLU_005314_3_1_14"/>
<dbReference type="OrthoDB" id="9805579at2"/>
<dbReference type="Proteomes" id="UP000000549">
    <property type="component" value="Chromosome"/>
</dbReference>
<dbReference type="GO" id="GO:0031522">
    <property type="term" value="C:cell envelope Sec protein transport complex"/>
    <property type="evidence" value="ECO:0007669"/>
    <property type="project" value="TreeGrafter"/>
</dbReference>
<dbReference type="GO" id="GO:0005829">
    <property type="term" value="C:cytosol"/>
    <property type="evidence" value="ECO:0007669"/>
    <property type="project" value="TreeGrafter"/>
</dbReference>
<dbReference type="GO" id="GO:0005886">
    <property type="term" value="C:plasma membrane"/>
    <property type="evidence" value="ECO:0007669"/>
    <property type="project" value="UniProtKB-SubCell"/>
</dbReference>
<dbReference type="GO" id="GO:0005524">
    <property type="term" value="F:ATP binding"/>
    <property type="evidence" value="ECO:0007669"/>
    <property type="project" value="UniProtKB-UniRule"/>
</dbReference>
<dbReference type="GO" id="GO:0008564">
    <property type="term" value="F:protein-exporting ATPase activity"/>
    <property type="evidence" value="ECO:0007669"/>
    <property type="project" value="UniProtKB-EC"/>
</dbReference>
<dbReference type="GO" id="GO:0065002">
    <property type="term" value="P:intracellular protein transmembrane transport"/>
    <property type="evidence" value="ECO:0007669"/>
    <property type="project" value="UniProtKB-UniRule"/>
</dbReference>
<dbReference type="GO" id="GO:0017038">
    <property type="term" value="P:protein import"/>
    <property type="evidence" value="ECO:0007669"/>
    <property type="project" value="InterPro"/>
</dbReference>
<dbReference type="GO" id="GO:0006605">
    <property type="term" value="P:protein targeting"/>
    <property type="evidence" value="ECO:0007669"/>
    <property type="project" value="UniProtKB-UniRule"/>
</dbReference>
<dbReference type="GO" id="GO:0043952">
    <property type="term" value="P:protein transport by the Sec complex"/>
    <property type="evidence" value="ECO:0007669"/>
    <property type="project" value="TreeGrafter"/>
</dbReference>
<dbReference type="CDD" id="cd17928">
    <property type="entry name" value="DEXDc_SecA"/>
    <property type="match status" value="1"/>
</dbReference>
<dbReference type="CDD" id="cd18803">
    <property type="entry name" value="SF2_C_secA"/>
    <property type="match status" value="1"/>
</dbReference>
<dbReference type="FunFam" id="3.40.50.300:FF:000429">
    <property type="entry name" value="Preprotein translocase subunit SecA"/>
    <property type="match status" value="1"/>
</dbReference>
<dbReference type="Gene3D" id="1.10.3060.10">
    <property type="entry name" value="Helical scaffold and wing domains of SecA"/>
    <property type="match status" value="1"/>
</dbReference>
<dbReference type="Gene3D" id="3.40.50.300">
    <property type="entry name" value="P-loop containing nucleotide triphosphate hydrolases"/>
    <property type="match status" value="3"/>
</dbReference>
<dbReference type="Gene3D" id="3.90.1440.10">
    <property type="entry name" value="SecA, preprotein cross-linking domain"/>
    <property type="match status" value="1"/>
</dbReference>
<dbReference type="HAMAP" id="MF_01382">
    <property type="entry name" value="SecA"/>
    <property type="match status" value="1"/>
</dbReference>
<dbReference type="InterPro" id="IPR014001">
    <property type="entry name" value="Helicase_ATP-bd"/>
</dbReference>
<dbReference type="InterPro" id="IPR001650">
    <property type="entry name" value="Helicase_C-like"/>
</dbReference>
<dbReference type="InterPro" id="IPR027417">
    <property type="entry name" value="P-loop_NTPase"/>
</dbReference>
<dbReference type="InterPro" id="IPR000185">
    <property type="entry name" value="SecA"/>
</dbReference>
<dbReference type="InterPro" id="IPR011115">
    <property type="entry name" value="SecA_DEAD"/>
</dbReference>
<dbReference type="InterPro" id="IPR014018">
    <property type="entry name" value="SecA_motor_DEAD"/>
</dbReference>
<dbReference type="InterPro" id="IPR011130">
    <property type="entry name" value="SecA_preprotein_X-link_dom"/>
</dbReference>
<dbReference type="InterPro" id="IPR044722">
    <property type="entry name" value="SecA_SF2_C"/>
</dbReference>
<dbReference type="InterPro" id="IPR011116">
    <property type="entry name" value="SecA_Wing/Scaffold"/>
</dbReference>
<dbReference type="InterPro" id="IPR036266">
    <property type="entry name" value="SecA_Wing/Scaffold_sf"/>
</dbReference>
<dbReference type="InterPro" id="IPR036670">
    <property type="entry name" value="SecA_X-link_sf"/>
</dbReference>
<dbReference type="NCBIfam" id="NF006630">
    <property type="entry name" value="PRK09200.1"/>
    <property type="match status" value="1"/>
</dbReference>
<dbReference type="NCBIfam" id="TIGR00963">
    <property type="entry name" value="secA"/>
    <property type="match status" value="1"/>
</dbReference>
<dbReference type="PANTHER" id="PTHR30612:SF0">
    <property type="entry name" value="CHLOROPLAST PROTEIN-TRANSPORTING ATPASE"/>
    <property type="match status" value="1"/>
</dbReference>
<dbReference type="PANTHER" id="PTHR30612">
    <property type="entry name" value="SECA INNER MEMBRANE COMPONENT OF SEC PROTEIN SECRETION SYSTEM"/>
    <property type="match status" value="1"/>
</dbReference>
<dbReference type="Pfam" id="PF21090">
    <property type="entry name" value="P-loop_SecA"/>
    <property type="match status" value="2"/>
</dbReference>
<dbReference type="Pfam" id="PF07517">
    <property type="entry name" value="SecA_DEAD"/>
    <property type="match status" value="1"/>
</dbReference>
<dbReference type="Pfam" id="PF01043">
    <property type="entry name" value="SecA_PP_bind"/>
    <property type="match status" value="1"/>
</dbReference>
<dbReference type="Pfam" id="PF07516">
    <property type="entry name" value="SecA_SW"/>
    <property type="match status" value="1"/>
</dbReference>
<dbReference type="PRINTS" id="PR00906">
    <property type="entry name" value="SECA"/>
</dbReference>
<dbReference type="SMART" id="SM00957">
    <property type="entry name" value="SecA_DEAD"/>
    <property type="match status" value="1"/>
</dbReference>
<dbReference type="SMART" id="SM00958">
    <property type="entry name" value="SecA_PP_bind"/>
    <property type="match status" value="1"/>
</dbReference>
<dbReference type="SUPFAM" id="SSF81886">
    <property type="entry name" value="Helical scaffold and wing domains of SecA"/>
    <property type="match status" value="1"/>
</dbReference>
<dbReference type="SUPFAM" id="SSF52540">
    <property type="entry name" value="P-loop containing nucleoside triphosphate hydrolases"/>
    <property type="match status" value="2"/>
</dbReference>
<dbReference type="SUPFAM" id="SSF81767">
    <property type="entry name" value="Pre-protein crosslinking domain of SecA"/>
    <property type="match status" value="1"/>
</dbReference>
<dbReference type="PROSITE" id="PS51196">
    <property type="entry name" value="SECA_MOTOR_DEAD"/>
    <property type="match status" value="1"/>
</dbReference>
<keyword id="KW-0067">ATP-binding</keyword>
<keyword id="KW-1003">Cell membrane</keyword>
<keyword id="KW-0963">Cytoplasm</keyword>
<keyword id="KW-0472">Membrane</keyword>
<keyword id="KW-0547">Nucleotide-binding</keyword>
<keyword id="KW-0653">Protein transport</keyword>
<keyword id="KW-1185">Reference proteome</keyword>
<keyword id="KW-1278">Translocase</keyword>
<keyword id="KW-0811">Translocation</keyword>
<keyword id="KW-0813">Transport</keyword>